<name>MIAA_LEGPH</name>
<feature type="chain" id="PRO_0000163932" description="tRNA dimethylallyltransferase">
    <location>
        <begin position="1"/>
        <end position="313"/>
    </location>
</feature>
<feature type="region of interest" description="Interaction with substrate tRNA" evidence="1">
    <location>
        <begin position="35"/>
        <end position="38"/>
    </location>
</feature>
<feature type="region of interest" description="Interaction with substrate tRNA" evidence="1">
    <location>
        <begin position="159"/>
        <end position="163"/>
    </location>
</feature>
<feature type="region of interest" description="Interaction with substrate tRNA" evidence="1">
    <location>
        <begin position="240"/>
        <end position="245"/>
    </location>
</feature>
<feature type="binding site" evidence="1">
    <location>
        <begin position="10"/>
        <end position="17"/>
    </location>
    <ligand>
        <name>ATP</name>
        <dbReference type="ChEBI" id="CHEBI:30616"/>
    </ligand>
</feature>
<feature type="binding site" evidence="1">
    <location>
        <begin position="12"/>
        <end position="17"/>
    </location>
    <ligand>
        <name>substrate</name>
    </ligand>
</feature>
<feature type="site" description="Interaction with substrate tRNA" evidence="1">
    <location>
        <position position="101"/>
    </location>
</feature>
<feature type="site" description="Interaction with substrate tRNA" evidence="1">
    <location>
        <position position="123"/>
    </location>
</feature>
<protein>
    <recommendedName>
        <fullName evidence="1">tRNA dimethylallyltransferase</fullName>
        <ecNumber evidence="1">2.5.1.75</ecNumber>
    </recommendedName>
    <alternativeName>
        <fullName evidence="1">Dimethylallyl diphosphate:tRNA dimethylallyltransferase</fullName>
        <shortName evidence="1">DMAPP:tRNA dimethylallyltransferase</shortName>
        <shortName evidence="1">DMATase</shortName>
    </alternativeName>
    <alternativeName>
        <fullName evidence="1">Isopentenyl-diphosphate:tRNA isopentenyltransferase</fullName>
        <shortName evidence="1">IPP transferase</shortName>
        <shortName evidence="1">IPPT</shortName>
        <shortName evidence="1">IPTase</shortName>
    </alternativeName>
</protein>
<comment type="function">
    <text evidence="1">Catalyzes the transfer of a dimethylallyl group onto the adenine at position 37 in tRNAs that read codons beginning with uridine, leading to the formation of N6-(dimethylallyl)adenosine (i(6)A).</text>
</comment>
<comment type="catalytic activity">
    <reaction evidence="1">
        <text>adenosine(37) in tRNA + dimethylallyl diphosphate = N(6)-dimethylallyladenosine(37) in tRNA + diphosphate</text>
        <dbReference type="Rhea" id="RHEA:26482"/>
        <dbReference type="Rhea" id="RHEA-COMP:10162"/>
        <dbReference type="Rhea" id="RHEA-COMP:10375"/>
        <dbReference type="ChEBI" id="CHEBI:33019"/>
        <dbReference type="ChEBI" id="CHEBI:57623"/>
        <dbReference type="ChEBI" id="CHEBI:74411"/>
        <dbReference type="ChEBI" id="CHEBI:74415"/>
        <dbReference type="EC" id="2.5.1.75"/>
    </reaction>
</comment>
<comment type="cofactor">
    <cofactor evidence="1">
        <name>Mg(2+)</name>
        <dbReference type="ChEBI" id="CHEBI:18420"/>
    </cofactor>
</comment>
<comment type="subunit">
    <text evidence="1">Monomer.</text>
</comment>
<comment type="similarity">
    <text evidence="1">Belongs to the IPP transferase family.</text>
</comment>
<comment type="sequence caution" evidence="2">
    <conflict type="erroneous initiation">
        <sequence resource="EMBL-CDS" id="AAU28754"/>
    </conflict>
</comment>
<dbReference type="EC" id="2.5.1.75" evidence="1"/>
<dbReference type="EMBL" id="AE017354">
    <property type="protein sequence ID" value="AAU28754.1"/>
    <property type="status" value="ALT_INIT"/>
    <property type="molecule type" value="Genomic_DNA"/>
</dbReference>
<dbReference type="RefSeq" id="WP_027225287.1">
    <property type="nucleotide sequence ID" value="NC_002942.5"/>
</dbReference>
<dbReference type="RefSeq" id="YP_096701.1">
    <property type="nucleotide sequence ID" value="NC_002942.5"/>
</dbReference>
<dbReference type="SMR" id="Q5ZS23"/>
<dbReference type="STRING" id="272624.lpg2696"/>
<dbReference type="PaxDb" id="272624-lpg2696"/>
<dbReference type="GeneID" id="57036697"/>
<dbReference type="KEGG" id="lpn:lpg2696"/>
<dbReference type="PATRIC" id="fig|272624.6.peg.2881"/>
<dbReference type="eggNOG" id="COG0324">
    <property type="taxonomic scope" value="Bacteria"/>
</dbReference>
<dbReference type="HOGENOM" id="CLU_032616_0_0_6"/>
<dbReference type="OrthoDB" id="9776390at2"/>
<dbReference type="Proteomes" id="UP000000609">
    <property type="component" value="Chromosome"/>
</dbReference>
<dbReference type="GO" id="GO:0005524">
    <property type="term" value="F:ATP binding"/>
    <property type="evidence" value="ECO:0007669"/>
    <property type="project" value="UniProtKB-UniRule"/>
</dbReference>
<dbReference type="GO" id="GO:0052381">
    <property type="term" value="F:tRNA dimethylallyltransferase activity"/>
    <property type="evidence" value="ECO:0007669"/>
    <property type="project" value="UniProtKB-UniRule"/>
</dbReference>
<dbReference type="GO" id="GO:0006400">
    <property type="term" value="P:tRNA modification"/>
    <property type="evidence" value="ECO:0007669"/>
    <property type="project" value="TreeGrafter"/>
</dbReference>
<dbReference type="FunFam" id="1.10.20.140:FF:000001">
    <property type="entry name" value="tRNA dimethylallyltransferase"/>
    <property type="match status" value="1"/>
</dbReference>
<dbReference type="Gene3D" id="1.10.20.140">
    <property type="match status" value="1"/>
</dbReference>
<dbReference type="Gene3D" id="3.40.50.300">
    <property type="entry name" value="P-loop containing nucleotide triphosphate hydrolases"/>
    <property type="match status" value="1"/>
</dbReference>
<dbReference type="HAMAP" id="MF_00185">
    <property type="entry name" value="IPP_trans"/>
    <property type="match status" value="1"/>
</dbReference>
<dbReference type="InterPro" id="IPR039657">
    <property type="entry name" value="Dimethylallyltransferase"/>
</dbReference>
<dbReference type="InterPro" id="IPR018022">
    <property type="entry name" value="IPT"/>
</dbReference>
<dbReference type="InterPro" id="IPR027417">
    <property type="entry name" value="P-loop_NTPase"/>
</dbReference>
<dbReference type="NCBIfam" id="TIGR00174">
    <property type="entry name" value="miaA"/>
    <property type="match status" value="1"/>
</dbReference>
<dbReference type="PANTHER" id="PTHR11088">
    <property type="entry name" value="TRNA DIMETHYLALLYLTRANSFERASE"/>
    <property type="match status" value="1"/>
</dbReference>
<dbReference type="PANTHER" id="PTHR11088:SF60">
    <property type="entry name" value="TRNA DIMETHYLALLYLTRANSFERASE"/>
    <property type="match status" value="1"/>
</dbReference>
<dbReference type="Pfam" id="PF01715">
    <property type="entry name" value="IPPT"/>
    <property type="match status" value="1"/>
</dbReference>
<dbReference type="SUPFAM" id="SSF52540">
    <property type="entry name" value="P-loop containing nucleoside triphosphate hydrolases"/>
    <property type="match status" value="1"/>
</dbReference>
<sequence>MNKLVFCLMGPTASGKTGLACELLTHFPFEIISVDSAMIYRDMNIGTAKPSIHELQRAPHYLIDIKDPVESYSAAQFCTDALSLCAEIIKRGNIPLLVGGTMMYFNALQKGLATLPEADEAVRKRLEEEALSQGWDFLYQKLSQLDPVTAARIHAHDTQRIQRALEVYYLTGSTLSTYLTGPHERPDYYFVNLALFPEQRSWLHERIAQRFDAMLSEGFIEEVQQLQAKWPIQINLPSMRCVGYRQILQHLAGHYDYETMREKGIAATRQLAKRQLTWLRHWEGALFYDSQNVGFNTDIIAKIREILDNTVSN</sequence>
<keyword id="KW-0067">ATP-binding</keyword>
<keyword id="KW-0460">Magnesium</keyword>
<keyword id="KW-0547">Nucleotide-binding</keyword>
<keyword id="KW-1185">Reference proteome</keyword>
<keyword id="KW-0808">Transferase</keyword>
<keyword id="KW-0819">tRNA processing</keyword>
<evidence type="ECO:0000255" key="1">
    <source>
        <dbReference type="HAMAP-Rule" id="MF_00185"/>
    </source>
</evidence>
<evidence type="ECO:0000305" key="2"/>
<accession>Q5ZS23</accession>
<organism>
    <name type="scientific">Legionella pneumophila subsp. pneumophila (strain Philadelphia 1 / ATCC 33152 / DSM 7513)</name>
    <dbReference type="NCBI Taxonomy" id="272624"/>
    <lineage>
        <taxon>Bacteria</taxon>
        <taxon>Pseudomonadati</taxon>
        <taxon>Pseudomonadota</taxon>
        <taxon>Gammaproteobacteria</taxon>
        <taxon>Legionellales</taxon>
        <taxon>Legionellaceae</taxon>
        <taxon>Legionella</taxon>
    </lineage>
</organism>
<gene>
    <name evidence="1" type="primary">miaA</name>
    <name type="ordered locus">lpg2696</name>
</gene>
<proteinExistence type="inferred from homology"/>
<reference key="1">
    <citation type="journal article" date="2004" name="Science">
        <title>The genomic sequence of the accidental pathogen Legionella pneumophila.</title>
        <authorList>
            <person name="Chien M."/>
            <person name="Morozova I."/>
            <person name="Shi S."/>
            <person name="Sheng H."/>
            <person name="Chen J."/>
            <person name="Gomez S.M."/>
            <person name="Asamani G."/>
            <person name="Hill K."/>
            <person name="Nuara J."/>
            <person name="Feder M."/>
            <person name="Rineer J."/>
            <person name="Greenberg J.J."/>
            <person name="Steshenko V."/>
            <person name="Park S.H."/>
            <person name="Zhao B."/>
            <person name="Teplitskaya E."/>
            <person name="Edwards J.R."/>
            <person name="Pampou S."/>
            <person name="Georghiou A."/>
            <person name="Chou I.-C."/>
            <person name="Iannuccilli W."/>
            <person name="Ulz M.E."/>
            <person name="Kim D.H."/>
            <person name="Geringer-Sameth A."/>
            <person name="Goldsberry C."/>
            <person name="Morozov P."/>
            <person name="Fischer S.G."/>
            <person name="Segal G."/>
            <person name="Qu X."/>
            <person name="Rzhetsky A."/>
            <person name="Zhang P."/>
            <person name="Cayanis E."/>
            <person name="De Jong P.J."/>
            <person name="Ju J."/>
            <person name="Kalachikov S."/>
            <person name="Shuman H.A."/>
            <person name="Russo J.J."/>
        </authorList>
    </citation>
    <scope>NUCLEOTIDE SEQUENCE [LARGE SCALE GENOMIC DNA]</scope>
    <source>
        <strain>Philadelphia 1 / ATCC 33152 / DSM 7513</strain>
    </source>
</reference>